<name>PRRP_BOVIN</name>
<accession>P81264</accession>
<keyword id="KW-0027">Amidation</keyword>
<keyword id="KW-0165">Cleavage on pair of basic residues</keyword>
<keyword id="KW-0903">Direct protein sequencing</keyword>
<keyword id="KW-0372">Hormone</keyword>
<keyword id="KW-1185">Reference proteome</keyword>
<keyword id="KW-0964">Secreted</keyword>
<keyword id="KW-0732">Signal</keyword>
<evidence type="ECO:0000256" key="1">
    <source>
        <dbReference type="SAM" id="MobiDB-lite"/>
    </source>
</evidence>
<evidence type="ECO:0000269" key="2">
    <source>
    </source>
</evidence>
<dbReference type="EMBL" id="AB015417">
    <property type="protein sequence ID" value="BAA29025.1"/>
    <property type="molecule type" value="mRNA"/>
</dbReference>
<dbReference type="RefSeq" id="NP_777215.1">
    <property type="nucleotide sequence ID" value="NM_174790.1"/>
</dbReference>
<dbReference type="FunCoup" id="P81264">
    <property type="interactions" value="1"/>
</dbReference>
<dbReference type="STRING" id="9913.ENSBTAP00000023421"/>
<dbReference type="PaxDb" id="9913-ENSBTAP00000023421"/>
<dbReference type="GeneID" id="286856"/>
<dbReference type="KEGG" id="bta:286856"/>
<dbReference type="CTD" id="51052"/>
<dbReference type="eggNOG" id="ENOG502S7XA">
    <property type="taxonomic scope" value="Eukaryota"/>
</dbReference>
<dbReference type="InParanoid" id="P81264"/>
<dbReference type="OrthoDB" id="63533at2759"/>
<dbReference type="Proteomes" id="UP000009136">
    <property type="component" value="Unplaced"/>
</dbReference>
<dbReference type="GO" id="GO:0005576">
    <property type="term" value="C:extracellular region"/>
    <property type="evidence" value="ECO:0007669"/>
    <property type="project" value="UniProtKB-SubCell"/>
</dbReference>
<dbReference type="GO" id="GO:0005184">
    <property type="term" value="F:neuropeptide hormone activity"/>
    <property type="evidence" value="ECO:0000318"/>
    <property type="project" value="GO_Central"/>
</dbReference>
<dbReference type="GO" id="GO:0031861">
    <property type="term" value="F:prolactin-releasing peptide receptor binding"/>
    <property type="evidence" value="ECO:0000318"/>
    <property type="project" value="GO_Central"/>
</dbReference>
<dbReference type="GO" id="GO:0007631">
    <property type="term" value="P:feeding behavior"/>
    <property type="evidence" value="ECO:0000318"/>
    <property type="project" value="GO_Central"/>
</dbReference>
<dbReference type="GO" id="GO:0007186">
    <property type="term" value="P:G protein-coupled receptor signaling pathway"/>
    <property type="evidence" value="ECO:0000318"/>
    <property type="project" value="GO_Central"/>
</dbReference>
<dbReference type="GO" id="GO:0043434">
    <property type="term" value="P:response to peptide hormone"/>
    <property type="evidence" value="ECO:0000318"/>
    <property type="project" value="GO_Central"/>
</dbReference>
<dbReference type="InterPro" id="IPR026194">
    <property type="entry name" value="PrRP"/>
</dbReference>
<dbReference type="PANTHER" id="PTHR17206">
    <property type="entry name" value="PROLACTIN-RELEASING PEPTIDE"/>
    <property type="match status" value="1"/>
</dbReference>
<dbReference type="PANTHER" id="PTHR17206:SF1">
    <property type="entry name" value="PROLACTIN-RELEASING PEPTIDE"/>
    <property type="match status" value="1"/>
</dbReference>
<dbReference type="Pfam" id="PF15172">
    <property type="entry name" value="Prolactin_RP"/>
    <property type="match status" value="1"/>
</dbReference>
<organism>
    <name type="scientific">Bos taurus</name>
    <name type="common">Bovine</name>
    <dbReference type="NCBI Taxonomy" id="9913"/>
    <lineage>
        <taxon>Eukaryota</taxon>
        <taxon>Metazoa</taxon>
        <taxon>Chordata</taxon>
        <taxon>Craniata</taxon>
        <taxon>Vertebrata</taxon>
        <taxon>Euteleostomi</taxon>
        <taxon>Mammalia</taxon>
        <taxon>Eutheria</taxon>
        <taxon>Laurasiatheria</taxon>
        <taxon>Artiodactyla</taxon>
        <taxon>Ruminantia</taxon>
        <taxon>Pecora</taxon>
        <taxon>Bovidae</taxon>
        <taxon>Bovinae</taxon>
        <taxon>Bos</taxon>
    </lineage>
</organism>
<sequence>MKAVGAWLLCLLLLGLALQGAASRAHQHSMEIRTPDINPAWYAGRGIRPVGRFGRRRAAPGDGPRPGPRRVPACFRLEGGAEPSRALPGRLTAQLVQE</sequence>
<gene>
    <name type="primary">PRLH</name>
    <name type="synonym">PRH</name>
</gene>
<proteinExistence type="evidence at protein level"/>
<comment type="function">
    <text>Stimulates prolactin (PRL) release and regulates the expression of prolactin through its receptor GPR10. May stimulate lactotrophs directly to secrete PRL.</text>
</comment>
<comment type="subcellular location">
    <subcellularLocation>
        <location>Secreted</location>
    </subcellularLocation>
</comment>
<comment type="tissue specificity">
    <text>Medulla oblongata and hypothalamus.</text>
</comment>
<comment type="PTM">
    <text evidence="2">Amidation of C-terminus is required for receptor interaction.</text>
</comment>
<reference key="1">
    <citation type="journal article" date="1998" name="Nature">
        <title>A prolactin-releasing peptide in the brain.</title>
        <authorList>
            <person name="Hinuma S."/>
            <person name="Habata Y."/>
            <person name="Fujii R."/>
            <person name="Kawamata Y."/>
            <person name="Hosoya M."/>
            <person name="Fukusumi S."/>
            <person name="Kitada C."/>
            <person name="Masuo Y."/>
            <person name="Asano T."/>
            <person name="Matsumoto H."/>
            <person name="Sekiguchi M."/>
            <person name="Kurokawa T."/>
            <person name="Nishimura O."/>
            <person name="Onda H."/>
            <person name="Fujino M."/>
        </authorList>
    </citation>
    <scope>NUCLEOTIDE SEQUENCE [MRNA]</scope>
    <scope>PROTEIN SEQUENCE OF 23-52</scope>
    <scope>AMIDATION AT PHE-53</scope>
    <source>
        <tissue>Brain</tissue>
    </source>
</reference>
<feature type="signal peptide" evidence="2">
    <location>
        <begin position="1"/>
        <end position="22"/>
    </location>
</feature>
<feature type="peptide" id="PRO_0000022141" description="Prolactin-releasing peptide PrRP31">
    <location>
        <begin position="23"/>
        <end position="53"/>
    </location>
</feature>
<feature type="peptide" id="PRO_0000022142" description="Prolactin-releasing peptide PrRP20">
    <location>
        <begin position="34"/>
        <end position="53"/>
    </location>
</feature>
<feature type="propeptide" id="PRO_0000022143">
    <location>
        <begin position="58"/>
        <end position="98"/>
    </location>
</feature>
<feature type="region of interest" description="Disordered" evidence="1">
    <location>
        <begin position="52"/>
        <end position="71"/>
    </location>
</feature>
<feature type="region of interest" description="Disordered" evidence="1">
    <location>
        <begin position="79"/>
        <end position="98"/>
    </location>
</feature>
<feature type="modified residue" description="Phenylalanine amide" evidence="2">
    <location>
        <position position="53"/>
    </location>
</feature>
<protein>
    <recommendedName>
        <fullName>Prolactin-releasing peptide</fullName>
        <shortName>PrRP</shortName>
    </recommendedName>
    <alternativeName>
        <fullName>Prolactin-releasing hormone</fullName>
    </alternativeName>
    <component>
        <recommendedName>
            <fullName>Prolactin-releasing peptide PrRP31</fullName>
        </recommendedName>
    </component>
    <component>
        <recommendedName>
            <fullName>Prolactin-releasing peptide PrRP20</fullName>
        </recommendedName>
    </component>
</protein>